<name>TV23A_HUMAN</name>
<sequence length="213" mass="24111">MKQALVDDTEDVSLDFGNEEELAFRKAKIRHPLATFFHLFFRVSAIVTYVSCDWFSKSFVGCFVMVLLLLSLDFWSVKNVTGRLLVGLRWWNQIDEDGKSHWIFEARKVSPNSIAATEAEARIFWLGLIICPMIWIVFFFSTLFSLKLKWLALVVAGISLQAANLYGYILCKMGGNSDIGKVTASFLSQTVFQTACPGDFQKPGLEGLEIHQH</sequence>
<gene>
    <name type="primary">TVP23A</name>
    <name type="synonym">FAM18A</name>
</gene>
<proteinExistence type="evidence at protein level"/>
<evidence type="ECO:0000255" key="1"/>
<evidence type="ECO:0000303" key="2">
    <source>
    </source>
</evidence>
<evidence type="ECO:0000305" key="3"/>
<organism>
    <name type="scientific">Homo sapiens</name>
    <name type="common">Human</name>
    <dbReference type="NCBI Taxonomy" id="9606"/>
    <lineage>
        <taxon>Eukaryota</taxon>
        <taxon>Metazoa</taxon>
        <taxon>Chordata</taxon>
        <taxon>Craniata</taxon>
        <taxon>Vertebrata</taxon>
        <taxon>Euteleostomi</taxon>
        <taxon>Mammalia</taxon>
        <taxon>Eutheria</taxon>
        <taxon>Euarchontoglires</taxon>
        <taxon>Primates</taxon>
        <taxon>Haplorrhini</taxon>
        <taxon>Catarrhini</taxon>
        <taxon>Hominidae</taxon>
        <taxon>Homo</taxon>
    </lineage>
</organism>
<accession>A6NH52</accession>
<accession>B2RUV4</accession>
<accession>B7ZW18</accession>
<protein>
    <recommendedName>
        <fullName>Golgi apparatus membrane protein TVP23 homolog A</fullName>
    </recommendedName>
</protein>
<comment type="interaction">
    <interactant intactId="EBI-13296313">
        <id>A6NH52</id>
    </interactant>
    <interactant intactId="EBI-750776">
        <id>O95214</id>
        <label>LEPROTL1</label>
    </interactant>
    <organismsDiffer>false</organismsDiffer>
    <experiments>3</experiments>
</comment>
<comment type="interaction">
    <interactant intactId="EBI-13296313">
        <id>A6NH52</id>
    </interactant>
    <interactant intactId="EBI-745846">
        <id>P57086</id>
        <label>SCAND1</label>
    </interactant>
    <organismsDiffer>false</organismsDiffer>
    <experiments>3</experiments>
</comment>
<comment type="interaction">
    <interactant intactId="EBI-13296313">
        <id>A6NH52</id>
    </interactant>
    <interactant intactId="EBI-2850112">
        <id>Q8TF74</id>
        <label>WIPF2</label>
    </interactant>
    <organismsDiffer>false</organismsDiffer>
    <experiments>3</experiments>
</comment>
<comment type="subcellular location">
    <subcellularLocation>
        <location evidence="3">Membrane</location>
        <topology evidence="3">Multi-pass membrane protein</topology>
    </subcellularLocation>
</comment>
<comment type="alternative products">
    <event type="alternative splicing"/>
    <isoform>
        <id>A6NH52-1</id>
        <name>1</name>
        <sequence type="displayed"/>
    </isoform>
    <isoform>
        <id>A6NH52-2</id>
        <name>2</name>
        <sequence type="described" ref="VSP_054190"/>
    </isoform>
</comment>
<comment type="similarity">
    <text evidence="3">Belongs to the TVP23 family.</text>
</comment>
<keyword id="KW-0025">Alternative splicing</keyword>
<keyword id="KW-0472">Membrane</keyword>
<keyword id="KW-1185">Reference proteome</keyword>
<keyword id="KW-0812">Transmembrane</keyword>
<keyword id="KW-1133">Transmembrane helix</keyword>
<reference key="1">
    <citation type="journal article" date="2004" name="Nat. Genet.">
        <title>Complete sequencing and characterization of 21,243 full-length human cDNAs.</title>
        <authorList>
            <person name="Ota T."/>
            <person name="Suzuki Y."/>
            <person name="Nishikawa T."/>
            <person name="Otsuki T."/>
            <person name="Sugiyama T."/>
            <person name="Irie R."/>
            <person name="Wakamatsu A."/>
            <person name="Hayashi K."/>
            <person name="Sato H."/>
            <person name="Nagai K."/>
            <person name="Kimura K."/>
            <person name="Makita H."/>
            <person name="Sekine M."/>
            <person name="Obayashi M."/>
            <person name="Nishi T."/>
            <person name="Shibahara T."/>
            <person name="Tanaka T."/>
            <person name="Ishii S."/>
            <person name="Yamamoto J."/>
            <person name="Saito K."/>
            <person name="Kawai Y."/>
            <person name="Isono Y."/>
            <person name="Nakamura Y."/>
            <person name="Nagahari K."/>
            <person name="Murakami K."/>
            <person name="Yasuda T."/>
            <person name="Iwayanagi T."/>
            <person name="Wagatsuma M."/>
            <person name="Shiratori A."/>
            <person name="Sudo H."/>
            <person name="Hosoiri T."/>
            <person name="Kaku Y."/>
            <person name="Kodaira H."/>
            <person name="Kondo H."/>
            <person name="Sugawara M."/>
            <person name="Takahashi M."/>
            <person name="Kanda K."/>
            <person name="Yokoi T."/>
            <person name="Furuya T."/>
            <person name="Kikkawa E."/>
            <person name="Omura Y."/>
            <person name="Abe K."/>
            <person name="Kamihara K."/>
            <person name="Katsuta N."/>
            <person name="Sato K."/>
            <person name="Tanikawa M."/>
            <person name="Yamazaki M."/>
            <person name="Ninomiya K."/>
            <person name="Ishibashi T."/>
            <person name="Yamashita H."/>
            <person name="Murakawa K."/>
            <person name="Fujimori K."/>
            <person name="Tanai H."/>
            <person name="Kimata M."/>
            <person name="Watanabe M."/>
            <person name="Hiraoka S."/>
            <person name="Chiba Y."/>
            <person name="Ishida S."/>
            <person name="Ono Y."/>
            <person name="Takiguchi S."/>
            <person name="Watanabe S."/>
            <person name="Yosida M."/>
            <person name="Hotuta T."/>
            <person name="Kusano J."/>
            <person name="Kanehori K."/>
            <person name="Takahashi-Fujii A."/>
            <person name="Hara H."/>
            <person name="Tanase T.-O."/>
            <person name="Nomura Y."/>
            <person name="Togiya S."/>
            <person name="Komai F."/>
            <person name="Hara R."/>
            <person name="Takeuchi K."/>
            <person name="Arita M."/>
            <person name="Imose N."/>
            <person name="Musashino K."/>
            <person name="Yuuki H."/>
            <person name="Oshima A."/>
            <person name="Sasaki N."/>
            <person name="Aotsuka S."/>
            <person name="Yoshikawa Y."/>
            <person name="Matsunawa H."/>
            <person name="Ichihara T."/>
            <person name="Shiohata N."/>
            <person name="Sano S."/>
            <person name="Moriya S."/>
            <person name="Momiyama H."/>
            <person name="Satoh N."/>
            <person name="Takami S."/>
            <person name="Terashima Y."/>
            <person name="Suzuki O."/>
            <person name="Nakagawa S."/>
            <person name="Senoh A."/>
            <person name="Mizoguchi H."/>
            <person name="Goto Y."/>
            <person name="Shimizu F."/>
            <person name="Wakebe H."/>
            <person name="Hishigaki H."/>
            <person name="Watanabe T."/>
            <person name="Sugiyama A."/>
            <person name="Takemoto M."/>
            <person name="Kawakami B."/>
            <person name="Yamazaki M."/>
            <person name="Watanabe K."/>
            <person name="Kumagai A."/>
            <person name="Itakura S."/>
            <person name="Fukuzumi Y."/>
            <person name="Fujimori Y."/>
            <person name="Komiyama M."/>
            <person name="Tashiro H."/>
            <person name="Tanigami A."/>
            <person name="Fujiwara T."/>
            <person name="Ono T."/>
            <person name="Yamada K."/>
            <person name="Fujii Y."/>
            <person name="Ozaki K."/>
            <person name="Hirao M."/>
            <person name="Ohmori Y."/>
            <person name="Kawabata A."/>
            <person name="Hikiji T."/>
            <person name="Kobatake N."/>
            <person name="Inagaki H."/>
            <person name="Ikema Y."/>
            <person name="Okamoto S."/>
            <person name="Okitani R."/>
            <person name="Kawakami T."/>
            <person name="Noguchi S."/>
            <person name="Itoh T."/>
            <person name="Shigeta K."/>
            <person name="Senba T."/>
            <person name="Matsumura K."/>
            <person name="Nakajima Y."/>
            <person name="Mizuno T."/>
            <person name="Morinaga M."/>
            <person name="Sasaki M."/>
            <person name="Togashi T."/>
            <person name="Oyama M."/>
            <person name="Hata H."/>
            <person name="Watanabe M."/>
            <person name="Komatsu T."/>
            <person name="Mizushima-Sugano J."/>
            <person name="Satoh T."/>
            <person name="Shirai Y."/>
            <person name="Takahashi Y."/>
            <person name="Nakagawa K."/>
            <person name="Okumura K."/>
            <person name="Nagase T."/>
            <person name="Nomura N."/>
            <person name="Kikuchi H."/>
            <person name="Masuho Y."/>
            <person name="Yamashita R."/>
            <person name="Nakai K."/>
            <person name="Yada T."/>
            <person name="Nakamura Y."/>
            <person name="Ohara O."/>
            <person name="Isogai T."/>
            <person name="Sugano S."/>
        </authorList>
    </citation>
    <scope>NUCLEOTIDE SEQUENCE [LARGE SCALE MRNA] (ISOFORM 1)</scope>
    <source>
        <tissue>Amygdala</tissue>
    </source>
</reference>
<reference key="2">
    <citation type="journal article" date="2004" name="Nature">
        <title>The sequence and analysis of duplication-rich human chromosome 16.</title>
        <authorList>
            <person name="Martin J."/>
            <person name="Han C."/>
            <person name="Gordon L.A."/>
            <person name="Terry A."/>
            <person name="Prabhakar S."/>
            <person name="She X."/>
            <person name="Xie G."/>
            <person name="Hellsten U."/>
            <person name="Chan Y.M."/>
            <person name="Altherr M."/>
            <person name="Couronne O."/>
            <person name="Aerts A."/>
            <person name="Bajorek E."/>
            <person name="Black S."/>
            <person name="Blumer H."/>
            <person name="Branscomb E."/>
            <person name="Brown N.C."/>
            <person name="Bruno W.J."/>
            <person name="Buckingham J.M."/>
            <person name="Callen D.F."/>
            <person name="Campbell C.S."/>
            <person name="Campbell M.L."/>
            <person name="Campbell E.W."/>
            <person name="Caoile C."/>
            <person name="Challacombe J.F."/>
            <person name="Chasteen L.A."/>
            <person name="Chertkov O."/>
            <person name="Chi H.C."/>
            <person name="Christensen M."/>
            <person name="Clark L.M."/>
            <person name="Cohn J.D."/>
            <person name="Denys M."/>
            <person name="Detter J.C."/>
            <person name="Dickson M."/>
            <person name="Dimitrijevic-Bussod M."/>
            <person name="Escobar J."/>
            <person name="Fawcett J.J."/>
            <person name="Flowers D."/>
            <person name="Fotopulos D."/>
            <person name="Glavina T."/>
            <person name="Gomez M."/>
            <person name="Gonzales E."/>
            <person name="Goodstein D."/>
            <person name="Goodwin L.A."/>
            <person name="Grady D.L."/>
            <person name="Grigoriev I."/>
            <person name="Groza M."/>
            <person name="Hammon N."/>
            <person name="Hawkins T."/>
            <person name="Haydu L."/>
            <person name="Hildebrand C.E."/>
            <person name="Huang W."/>
            <person name="Israni S."/>
            <person name="Jett J."/>
            <person name="Jewett P.B."/>
            <person name="Kadner K."/>
            <person name="Kimball H."/>
            <person name="Kobayashi A."/>
            <person name="Krawczyk M.-C."/>
            <person name="Leyba T."/>
            <person name="Longmire J.L."/>
            <person name="Lopez F."/>
            <person name="Lou Y."/>
            <person name="Lowry S."/>
            <person name="Ludeman T."/>
            <person name="Manohar C.F."/>
            <person name="Mark G.A."/>
            <person name="McMurray K.L."/>
            <person name="Meincke L.J."/>
            <person name="Morgan J."/>
            <person name="Moyzis R.K."/>
            <person name="Mundt M.O."/>
            <person name="Munk A.C."/>
            <person name="Nandkeshwar R.D."/>
            <person name="Pitluck S."/>
            <person name="Pollard M."/>
            <person name="Predki P."/>
            <person name="Parson-Quintana B."/>
            <person name="Ramirez L."/>
            <person name="Rash S."/>
            <person name="Retterer J."/>
            <person name="Ricke D.O."/>
            <person name="Robinson D.L."/>
            <person name="Rodriguez A."/>
            <person name="Salamov A."/>
            <person name="Saunders E.H."/>
            <person name="Scott D."/>
            <person name="Shough T."/>
            <person name="Stallings R.L."/>
            <person name="Stalvey M."/>
            <person name="Sutherland R.D."/>
            <person name="Tapia R."/>
            <person name="Tesmer J.G."/>
            <person name="Thayer N."/>
            <person name="Thompson L.S."/>
            <person name="Tice H."/>
            <person name="Torney D.C."/>
            <person name="Tran-Gyamfi M."/>
            <person name="Tsai M."/>
            <person name="Ulanovsky L.E."/>
            <person name="Ustaszewska A."/>
            <person name="Vo N."/>
            <person name="White P.S."/>
            <person name="Williams A.L."/>
            <person name="Wills P.L."/>
            <person name="Wu J.-R."/>
            <person name="Wu K."/>
            <person name="Yang J."/>
            <person name="DeJong P."/>
            <person name="Bruce D."/>
            <person name="Doggett N.A."/>
            <person name="Deaven L."/>
            <person name="Schmutz J."/>
            <person name="Grimwood J."/>
            <person name="Richardson P."/>
            <person name="Rokhsar D.S."/>
            <person name="Eichler E.E."/>
            <person name="Gilna P."/>
            <person name="Lucas S.M."/>
            <person name="Myers R.M."/>
            <person name="Rubin E.M."/>
            <person name="Pennacchio L.A."/>
        </authorList>
    </citation>
    <scope>NUCLEOTIDE SEQUENCE [LARGE SCALE GENOMIC DNA]</scope>
</reference>
<reference key="3">
    <citation type="journal article" date="2004" name="Genome Res.">
        <title>The status, quality, and expansion of the NIH full-length cDNA project: the Mammalian Gene Collection (MGC).</title>
        <authorList>
            <consortium name="The MGC Project Team"/>
        </authorList>
    </citation>
    <scope>NUCLEOTIDE SEQUENCE [LARGE SCALE MRNA] (ISOFORMS 1 AND 2)</scope>
    <source>
        <tissue>Brain</tissue>
    </source>
</reference>
<dbReference type="EMBL" id="AK294418">
    <property type="protein sequence ID" value="BAG57667.1"/>
    <property type="molecule type" value="mRNA"/>
</dbReference>
<dbReference type="EMBL" id="AC074136">
    <property type="status" value="NOT_ANNOTATED_CDS"/>
    <property type="molecule type" value="Genomic_DNA"/>
</dbReference>
<dbReference type="EMBL" id="BC146882">
    <property type="protein sequence ID" value="AAI46883.1"/>
    <property type="molecule type" value="mRNA"/>
</dbReference>
<dbReference type="EMBL" id="BC146886">
    <property type="protein sequence ID" value="AAI46887.1"/>
    <property type="molecule type" value="mRNA"/>
</dbReference>
<dbReference type="EMBL" id="BC171817">
    <property type="protein sequence ID" value="AAI71817.1"/>
    <property type="molecule type" value="mRNA"/>
</dbReference>
<dbReference type="CCDS" id="CCDS45408.1">
    <molecule id="A6NH52-1"/>
</dbReference>
<dbReference type="RefSeq" id="NP_001072980.1">
    <molecule id="A6NH52-1"/>
    <property type="nucleotide sequence ID" value="NM_001079512.4"/>
</dbReference>
<dbReference type="RefSeq" id="XP_006721007.1">
    <property type="nucleotide sequence ID" value="XM_006720944.3"/>
</dbReference>
<dbReference type="RefSeq" id="XP_011520956.1">
    <molecule id="A6NH52-1"/>
    <property type="nucleotide sequence ID" value="XM_011522654.4"/>
</dbReference>
<dbReference type="RefSeq" id="XP_016879138.1">
    <property type="nucleotide sequence ID" value="XM_017023649.1"/>
</dbReference>
<dbReference type="RefSeq" id="XP_047290560.1">
    <molecule id="A6NH52-1"/>
    <property type="nucleotide sequence ID" value="XM_047434604.1"/>
</dbReference>
<dbReference type="RefSeq" id="XP_054169850.1">
    <molecule id="A6NH52-1"/>
    <property type="nucleotide sequence ID" value="XM_054313875.1"/>
</dbReference>
<dbReference type="RefSeq" id="XP_054169851.1">
    <molecule id="A6NH52-1"/>
    <property type="nucleotide sequence ID" value="XM_054313876.1"/>
</dbReference>
<dbReference type="BioGRID" id="612864">
    <property type="interactions" value="8"/>
</dbReference>
<dbReference type="FunCoup" id="A6NH52">
    <property type="interactions" value="393"/>
</dbReference>
<dbReference type="IntAct" id="A6NH52">
    <property type="interactions" value="4"/>
</dbReference>
<dbReference type="STRING" id="9606.ENSP00000299866"/>
<dbReference type="iPTMnet" id="A6NH52"/>
<dbReference type="PhosphoSitePlus" id="A6NH52"/>
<dbReference type="BioMuta" id="TVP23A"/>
<dbReference type="PaxDb" id="9606-ENSP00000299866"/>
<dbReference type="PeptideAtlas" id="A6NH52"/>
<dbReference type="ProteomicsDB" id="1180">
    <molecule id="A6NH52-1"/>
</dbReference>
<dbReference type="Antibodypedia" id="71684">
    <property type="antibodies" value="27 antibodies from 7 providers"/>
</dbReference>
<dbReference type="DNASU" id="780776"/>
<dbReference type="Ensembl" id="ENST00000299866.13">
    <molecule id="A6NH52-1"/>
    <property type="protein sequence ID" value="ENSP00000299866.8"/>
    <property type="gene ID" value="ENSG00000166676.17"/>
</dbReference>
<dbReference type="Ensembl" id="ENST00000456096.6">
    <molecule id="A6NH52-2"/>
    <property type="protein sequence ID" value="ENSP00000411972.2"/>
    <property type="gene ID" value="ENSG00000166676.17"/>
</dbReference>
<dbReference type="Ensembl" id="ENST00000575135.5">
    <molecule id="A6NH52-1"/>
    <property type="protein sequence ID" value="ENSP00000460567.1"/>
    <property type="gene ID" value="ENSG00000166676.17"/>
</dbReference>
<dbReference type="GeneID" id="780776"/>
<dbReference type="KEGG" id="hsa:780776"/>
<dbReference type="MANE-Select" id="ENST00000299866.13">
    <property type="protein sequence ID" value="ENSP00000299866.8"/>
    <property type="RefSeq nucleotide sequence ID" value="NM_001079512.4"/>
    <property type="RefSeq protein sequence ID" value="NP_001072980.1"/>
</dbReference>
<dbReference type="UCSC" id="uc010buo.2">
    <molecule id="A6NH52-1"/>
    <property type="organism name" value="human"/>
</dbReference>
<dbReference type="AGR" id="HGNC:20398"/>
<dbReference type="CTD" id="780776"/>
<dbReference type="DisGeNET" id="780776"/>
<dbReference type="GeneCards" id="TVP23A"/>
<dbReference type="HGNC" id="HGNC:20398">
    <property type="gene designation" value="TVP23A"/>
</dbReference>
<dbReference type="HPA" id="ENSG00000166676">
    <property type="expression patterns" value="Tissue enhanced (brain)"/>
</dbReference>
<dbReference type="neXtProt" id="NX_A6NH52"/>
<dbReference type="OpenTargets" id="ENSG00000166676"/>
<dbReference type="PharmGKB" id="PA134902394"/>
<dbReference type="VEuPathDB" id="HostDB:ENSG00000166676"/>
<dbReference type="eggNOG" id="KOG3195">
    <property type="taxonomic scope" value="Eukaryota"/>
</dbReference>
<dbReference type="GeneTree" id="ENSGT00390000004428"/>
<dbReference type="HOGENOM" id="CLU_074845_3_0_1"/>
<dbReference type="InParanoid" id="A6NH52"/>
<dbReference type="OMA" id="KMIWWID"/>
<dbReference type="OrthoDB" id="2151161at2759"/>
<dbReference type="PAN-GO" id="A6NH52">
    <property type="GO annotations" value="3 GO annotations based on evolutionary models"/>
</dbReference>
<dbReference type="PhylomeDB" id="A6NH52"/>
<dbReference type="TreeFam" id="TF312906"/>
<dbReference type="PathwayCommons" id="A6NH52"/>
<dbReference type="SignaLink" id="A6NH52"/>
<dbReference type="BioGRID-ORCS" id="780776">
    <property type="hits" value="12 hits in 1146 CRISPR screens"/>
</dbReference>
<dbReference type="CD-CODE" id="FB4E32DD">
    <property type="entry name" value="Presynaptic clusters and postsynaptic densities"/>
</dbReference>
<dbReference type="ChiTaRS" id="TVP23A">
    <property type="organism name" value="human"/>
</dbReference>
<dbReference type="GenomeRNAi" id="780776"/>
<dbReference type="Pharos" id="A6NH52">
    <property type="development level" value="Tdark"/>
</dbReference>
<dbReference type="PRO" id="PR:A6NH52"/>
<dbReference type="Proteomes" id="UP000005640">
    <property type="component" value="Chromosome 16"/>
</dbReference>
<dbReference type="RNAct" id="A6NH52">
    <property type="molecule type" value="protein"/>
</dbReference>
<dbReference type="Bgee" id="ENSG00000166676">
    <property type="expression patterns" value="Expressed in colonic epithelium and 101 other cell types or tissues"/>
</dbReference>
<dbReference type="ExpressionAtlas" id="A6NH52">
    <property type="expression patterns" value="baseline and differential"/>
</dbReference>
<dbReference type="GO" id="GO:0000139">
    <property type="term" value="C:Golgi membrane"/>
    <property type="evidence" value="ECO:0000318"/>
    <property type="project" value="GO_Central"/>
</dbReference>
<dbReference type="GO" id="GO:0009306">
    <property type="term" value="P:protein secretion"/>
    <property type="evidence" value="ECO:0000318"/>
    <property type="project" value="GO_Central"/>
</dbReference>
<dbReference type="GO" id="GO:0016192">
    <property type="term" value="P:vesicle-mediated transport"/>
    <property type="evidence" value="ECO:0000318"/>
    <property type="project" value="GO_Central"/>
</dbReference>
<dbReference type="InterPro" id="IPR008564">
    <property type="entry name" value="TVP23-like"/>
</dbReference>
<dbReference type="PANTHER" id="PTHR13019">
    <property type="entry name" value="GOLGI APPARATUS MEMBRANE PROTEIN TVP23"/>
    <property type="match status" value="1"/>
</dbReference>
<dbReference type="PANTHER" id="PTHR13019:SF18">
    <property type="entry name" value="GOLGI APPARATUS MEMBRANE PROTEIN TVP23 HOMOLOG A"/>
    <property type="match status" value="1"/>
</dbReference>
<dbReference type="Pfam" id="PF05832">
    <property type="entry name" value="DUF846"/>
    <property type="match status" value="1"/>
</dbReference>
<feature type="chain" id="PRO_0000327940" description="Golgi apparatus membrane protein TVP23 homolog A">
    <location>
        <begin position="1"/>
        <end position="213"/>
    </location>
</feature>
<feature type="transmembrane region" description="Helical" evidence="1">
    <location>
        <begin position="32"/>
        <end position="52"/>
    </location>
</feature>
<feature type="transmembrane region" description="Helical" evidence="1">
    <location>
        <begin position="54"/>
        <end position="74"/>
    </location>
</feature>
<feature type="transmembrane region" description="Helical" evidence="1">
    <location>
        <begin position="123"/>
        <end position="143"/>
    </location>
</feature>
<feature type="transmembrane region" description="Helical" evidence="1">
    <location>
        <begin position="150"/>
        <end position="170"/>
    </location>
</feature>
<feature type="splice variant" id="VSP_054190" description="In isoform 2." evidence="2">
    <original>HPLATFFHLFFRVSAIVTYVSCDWFSKSFVGCFVMVLLLLSLDFWSV</original>
    <variation>DRVSKLLASVILLPWPPKVLGL</variation>
    <location>
        <begin position="31"/>
        <end position="77"/>
    </location>
</feature>